<gene>
    <name type="primary">CNE1</name>
    <name type="ordered locus">YAL058W</name>
    <name type="ORF">FUN48</name>
</gene>
<accession>P27825</accession>
<accession>D6VPG1</accession>
<protein>
    <recommendedName>
        <fullName>Calnexin homolog</fullName>
    </recommendedName>
</protein>
<name>CALX_YEAST</name>
<keyword id="KW-0143">Chaperone</keyword>
<keyword id="KW-1015">Disulfide bond</keyword>
<keyword id="KW-0256">Endoplasmic reticulum</keyword>
<keyword id="KW-0325">Glycoprotein</keyword>
<keyword id="KW-0430">Lectin</keyword>
<keyword id="KW-0472">Membrane</keyword>
<keyword id="KW-1185">Reference proteome</keyword>
<keyword id="KW-0677">Repeat</keyword>
<keyword id="KW-0732">Signal</keyword>
<keyword id="KW-0812">Transmembrane</keyword>
<keyword id="KW-1133">Transmembrane helix</keyword>
<feature type="signal peptide" evidence="3">
    <location>
        <begin position="1"/>
        <end position="19"/>
    </location>
</feature>
<feature type="chain" id="PRO_0000004208" description="Calnexin homolog">
    <location>
        <begin position="20"/>
        <end position="502"/>
    </location>
</feature>
<feature type="topological domain" description="Lumenal" evidence="3">
    <location>
        <begin position="20"/>
        <end position="481"/>
    </location>
</feature>
<feature type="transmembrane region" description="Helical" evidence="3">
    <location>
        <begin position="482"/>
        <end position="502"/>
    </location>
</feature>
<feature type="repeat" description="1-1">
    <location>
        <begin position="250"/>
        <end position="261"/>
    </location>
</feature>
<feature type="repeat" description="1-2">
    <location>
        <begin position="267"/>
        <end position="278"/>
    </location>
</feature>
<feature type="repeat" description="1-3">
    <location>
        <begin position="286"/>
        <end position="297"/>
    </location>
</feature>
<feature type="repeat" description="1-4">
    <location>
        <begin position="305"/>
        <end position="316"/>
    </location>
</feature>
<feature type="repeat" description="2-1">
    <location>
        <begin position="320"/>
        <end position="330"/>
    </location>
</feature>
<feature type="repeat" description="2-2">
    <location>
        <begin position="339"/>
        <end position="349"/>
    </location>
</feature>
<feature type="repeat" description="2-3">
    <location>
        <begin position="353"/>
        <end position="363"/>
    </location>
</feature>
<feature type="repeat" description="2-4">
    <location>
        <begin position="367"/>
        <end position="377"/>
    </location>
</feature>
<feature type="region of interest" description="P domain (Extended arm)" evidence="1">
    <location>
        <begin position="248"/>
        <end position="381"/>
    </location>
</feature>
<feature type="region of interest" description="4 X approximate repeats">
    <location>
        <begin position="250"/>
        <end position="316"/>
    </location>
</feature>
<feature type="region of interest" description="4 X approximate repeats">
    <location>
        <begin position="320"/>
        <end position="377"/>
    </location>
</feature>
<feature type="binding site" evidence="2">
    <location>
        <position position="131"/>
    </location>
    <ligand>
        <name>an alpha-D-glucoside</name>
        <dbReference type="ChEBI" id="CHEBI:22390"/>
    </ligand>
</feature>
<feature type="binding site" evidence="2">
    <location>
        <position position="159"/>
    </location>
    <ligand>
        <name>an alpha-D-glucoside</name>
        <dbReference type="ChEBI" id="CHEBI:22390"/>
    </ligand>
</feature>
<feature type="binding site" evidence="2">
    <location>
        <position position="398"/>
    </location>
    <ligand>
        <name>an alpha-D-glucoside</name>
        <dbReference type="ChEBI" id="CHEBI:22390"/>
    </ligand>
</feature>
<feature type="glycosylation site" description="N-linked (GlcNAc...) asparagine" evidence="3">
    <location>
        <position position="25"/>
    </location>
</feature>
<feature type="glycosylation site" description="N-linked (GlcNAc...) asparagine" evidence="3">
    <location>
        <position position="104"/>
    </location>
</feature>
<feature type="glycosylation site" description="N-linked (GlcNAc...) asparagine" evidence="3">
    <location>
        <position position="296"/>
    </location>
</feature>
<feature type="glycosylation site" description="N-linked (GlcNAc...) asparagine" evidence="3">
    <location>
        <position position="416"/>
    </location>
</feature>
<feature type="glycosylation site" description="N-linked (GlcNAc...) asparagine" evidence="3">
    <location>
        <position position="425"/>
    </location>
</feature>
<feature type="disulfide bond" evidence="1">
    <location>
        <begin position="125"/>
        <end position="161"/>
    </location>
</feature>
<feature type="disulfide bond" evidence="1">
    <location>
        <begin position="332"/>
        <end position="338"/>
    </location>
</feature>
<dbReference type="EMBL" id="X66470">
    <property type="protein sequence ID" value="CAA47100.1"/>
    <property type="molecule type" value="Genomic_DNA"/>
</dbReference>
<dbReference type="EMBL" id="L11012">
    <property type="protein sequence ID" value="AAA65967.1"/>
    <property type="molecule type" value="Genomic_DNA"/>
</dbReference>
<dbReference type="EMBL" id="U12980">
    <property type="protein sequence ID" value="AAC04976.1"/>
    <property type="molecule type" value="Genomic_DNA"/>
</dbReference>
<dbReference type="EMBL" id="AY692920">
    <property type="protein sequence ID" value="AAT92939.1"/>
    <property type="molecule type" value="Genomic_DNA"/>
</dbReference>
<dbReference type="EMBL" id="BK006935">
    <property type="protein sequence ID" value="DAA06931.1"/>
    <property type="molecule type" value="Genomic_DNA"/>
</dbReference>
<dbReference type="PIR" id="S29347">
    <property type="entry name" value="S29347"/>
</dbReference>
<dbReference type="RefSeq" id="NP_009343.1">
    <property type="nucleotide sequence ID" value="NM_001178200.1"/>
</dbReference>
<dbReference type="SMR" id="P27825"/>
<dbReference type="BioGRID" id="31772">
    <property type="interactions" value="202"/>
</dbReference>
<dbReference type="DIP" id="DIP-4121N"/>
<dbReference type="FunCoup" id="P27825">
    <property type="interactions" value="298"/>
</dbReference>
<dbReference type="STRING" id="4932.YAL058W"/>
<dbReference type="GlyCosmos" id="P27825">
    <property type="glycosylation" value="5 sites, No reported glycans"/>
</dbReference>
<dbReference type="GlyGen" id="P27825">
    <property type="glycosylation" value="6 sites"/>
</dbReference>
<dbReference type="iPTMnet" id="P27825"/>
<dbReference type="PaxDb" id="4932-YAL058W"/>
<dbReference type="PeptideAtlas" id="P27825"/>
<dbReference type="TopDownProteomics" id="P27825"/>
<dbReference type="EnsemblFungi" id="YAL058W_mRNA">
    <property type="protein sequence ID" value="YAL058W"/>
    <property type="gene ID" value="YAL058W"/>
</dbReference>
<dbReference type="GeneID" id="851241"/>
<dbReference type="KEGG" id="sce:YAL058W"/>
<dbReference type="AGR" id="SGD:S000000054"/>
<dbReference type="SGD" id="S000000054">
    <property type="gene designation" value="CNE1"/>
</dbReference>
<dbReference type="VEuPathDB" id="FungiDB:YAL058W"/>
<dbReference type="eggNOG" id="KOG0675">
    <property type="taxonomic scope" value="Eukaryota"/>
</dbReference>
<dbReference type="GeneTree" id="ENSGT00950000182915"/>
<dbReference type="HOGENOM" id="CLU_018224_1_2_1"/>
<dbReference type="InParanoid" id="P27825"/>
<dbReference type="OMA" id="SGCGKWE"/>
<dbReference type="OrthoDB" id="1938156at2759"/>
<dbReference type="BioCyc" id="YEAST:G3O-28861-MONOMER"/>
<dbReference type="Reactome" id="R-SCE-901042">
    <property type="pathway name" value="Calnexin/calreticulin cycle"/>
</dbReference>
<dbReference type="BioGRID-ORCS" id="851241">
    <property type="hits" value="1 hit in 10 CRISPR screens"/>
</dbReference>
<dbReference type="PRO" id="PR:P27825"/>
<dbReference type="Proteomes" id="UP000002311">
    <property type="component" value="Chromosome I"/>
</dbReference>
<dbReference type="RNAct" id="P27825">
    <property type="molecule type" value="protein"/>
</dbReference>
<dbReference type="GO" id="GO:0005783">
    <property type="term" value="C:endoplasmic reticulum"/>
    <property type="evidence" value="ECO:0007005"/>
    <property type="project" value="SGD"/>
</dbReference>
<dbReference type="GO" id="GO:0005789">
    <property type="term" value="C:endoplasmic reticulum membrane"/>
    <property type="evidence" value="ECO:0000314"/>
    <property type="project" value="SGD"/>
</dbReference>
<dbReference type="GO" id="GO:0005509">
    <property type="term" value="F:calcium ion binding"/>
    <property type="evidence" value="ECO:0000318"/>
    <property type="project" value="GO_Central"/>
</dbReference>
<dbReference type="GO" id="GO:0030246">
    <property type="term" value="F:carbohydrate binding"/>
    <property type="evidence" value="ECO:0007669"/>
    <property type="project" value="UniProtKB-KW"/>
</dbReference>
<dbReference type="GO" id="GO:0051082">
    <property type="term" value="F:unfolded protein binding"/>
    <property type="evidence" value="ECO:0000314"/>
    <property type="project" value="SGD"/>
</dbReference>
<dbReference type="GO" id="GO:0036503">
    <property type="term" value="P:ERAD pathway"/>
    <property type="evidence" value="ECO:0000315"/>
    <property type="project" value="SGD"/>
</dbReference>
<dbReference type="GO" id="GO:0006457">
    <property type="term" value="P:protein folding"/>
    <property type="evidence" value="ECO:0000315"/>
    <property type="project" value="SGD"/>
</dbReference>
<dbReference type="FunFam" id="2.10.250.10:FF:000004">
    <property type="entry name" value="CNE1p Calnexin"/>
    <property type="match status" value="1"/>
</dbReference>
<dbReference type="Gene3D" id="2.60.120.200">
    <property type="match status" value="1"/>
</dbReference>
<dbReference type="Gene3D" id="2.10.250.10">
    <property type="entry name" value="Calreticulin/calnexin, P domain"/>
    <property type="match status" value="1"/>
</dbReference>
<dbReference type="InterPro" id="IPR001580">
    <property type="entry name" value="Calret/calnex"/>
</dbReference>
<dbReference type="InterPro" id="IPR018124">
    <property type="entry name" value="Calret/calnex_CS"/>
</dbReference>
<dbReference type="InterPro" id="IPR009033">
    <property type="entry name" value="Calreticulin/calnexin_P_dom_sf"/>
</dbReference>
<dbReference type="InterPro" id="IPR013320">
    <property type="entry name" value="ConA-like_dom_sf"/>
</dbReference>
<dbReference type="PANTHER" id="PTHR11073:SF1">
    <property type="entry name" value="CALNEXIN 14D-RELATED"/>
    <property type="match status" value="1"/>
</dbReference>
<dbReference type="PANTHER" id="PTHR11073">
    <property type="entry name" value="CALRETICULIN AND CALNEXIN"/>
    <property type="match status" value="1"/>
</dbReference>
<dbReference type="Pfam" id="PF00262">
    <property type="entry name" value="Calreticulin"/>
    <property type="match status" value="1"/>
</dbReference>
<dbReference type="PRINTS" id="PR00626">
    <property type="entry name" value="CALRETICULIN"/>
</dbReference>
<dbReference type="SUPFAM" id="SSF49899">
    <property type="entry name" value="Concanavalin A-like lectins/glucanases"/>
    <property type="match status" value="1"/>
</dbReference>
<dbReference type="SUPFAM" id="SSF63887">
    <property type="entry name" value="P-domain of calnexin/calreticulin"/>
    <property type="match status" value="1"/>
</dbReference>
<dbReference type="PROSITE" id="PS00803">
    <property type="entry name" value="CALRETICULIN_1"/>
    <property type="match status" value="1"/>
</dbReference>
<dbReference type="PROSITE" id="PS00804">
    <property type="entry name" value="CALRETICULIN_2"/>
    <property type="match status" value="1"/>
</dbReference>
<dbReference type="PROSITE" id="PS00805">
    <property type="entry name" value="CALRETICULIN_REPEAT"/>
    <property type="match status" value="1"/>
</dbReference>
<reference key="1">
    <citation type="journal article" date="1993" name="Yeast">
        <title>CNE1, a Saccharomyces cerevisiae homologue of the genes encoding mammalian calnexin and calreticulin.</title>
        <authorList>
            <person name="de Virgilio C."/>
            <person name="Buerckert N."/>
            <person name="Neuhaus J.-M."/>
            <person name="Boller T."/>
            <person name="Wiemken A."/>
        </authorList>
    </citation>
    <scope>NUCLEOTIDE SEQUENCE [GENOMIC DNA]</scope>
    <source>
        <strain>S288c / GRF88</strain>
    </source>
</reference>
<reference key="2">
    <citation type="journal article" date="1995" name="J. Biol. Chem.">
        <title>Saccharomyces cerevisiae CNE1 encodes an endoplasmic reticulum (ER) membrane protein with sequence similarity to calnexin and calreticulin and functions as a constituent of the ER quality control apparatus.</title>
        <authorList>
            <person name="Parlati F."/>
            <person name="Dominguez M."/>
            <person name="Bergeron J.J.M."/>
            <person name="Thomas D.Y."/>
        </authorList>
    </citation>
    <scope>NUCLEOTIDE SEQUENCE [GENOMIC DNA]</scope>
</reference>
<reference key="3">
    <citation type="journal article" date="1995" name="Proc. Natl. Acad. Sci. U.S.A.">
        <title>The nucleotide sequence of chromosome I from Saccharomyces cerevisiae.</title>
        <authorList>
            <person name="Bussey H."/>
            <person name="Kaback D.B."/>
            <person name="Zhong W.-W."/>
            <person name="Vo D.H."/>
            <person name="Clark M.W."/>
            <person name="Fortin N."/>
            <person name="Hall J."/>
            <person name="Ouellette B.F.F."/>
            <person name="Keng T."/>
            <person name="Barton A.B."/>
            <person name="Su Y."/>
            <person name="Davies C.J."/>
            <person name="Storms R.K."/>
        </authorList>
    </citation>
    <scope>NUCLEOTIDE SEQUENCE [LARGE SCALE GENOMIC DNA]</scope>
    <source>
        <strain>ATCC 204508 / S288c</strain>
    </source>
</reference>
<reference key="4">
    <citation type="journal article" date="2014" name="G3 (Bethesda)">
        <title>The reference genome sequence of Saccharomyces cerevisiae: Then and now.</title>
        <authorList>
            <person name="Engel S.R."/>
            <person name="Dietrich F.S."/>
            <person name="Fisk D.G."/>
            <person name="Binkley G."/>
            <person name="Balakrishnan R."/>
            <person name="Costanzo M.C."/>
            <person name="Dwight S.S."/>
            <person name="Hitz B.C."/>
            <person name="Karra K."/>
            <person name="Nash R.S."/>
            <person name="Weng S."/>
            <person name="Wong E.D."/>
            <person name="Lloyd P."/>
            <person name="Skrzypek M.S."/>
            <person name="Miyasato S.R."/>
            <person name="Simison M."/>
            <person name="Cherry J.M."/>
        </authorList>
    </citation>
    <scope>GENOME REANNOTATION</scope>
    <source>
        <strain>ATCC 204508 / S288c</strain>
    </source>
</reference>
<reference key="5">
    <citation type="journal article" date="2007" name="Genome Res.">
        <title>Approaching a complete repository of sequence-verified protein-encoding clones for Saccharomyces cerevisiae.</title>
        <authorList>
            <person name="Hu Y."/>
            <person name="Rolfs A."/>
            <person name="Bhullar B."/>
            <person name="Murthy T.V.S."/>
            <person name="Zhu C."/>
            <person name="Berger M.F."/>
            <person name="Camargo A.A."/>
            <person name="Kelley F."/>
            <person name="McCarron S."/>
            <person name="Jepson D."/>
            <person name="Richardson A."/>
            <person name="Raphael J."/>
            <person name="Moreira D."/>
            <person name="Taycher E."/>
            <person name="Zuo D."/>
            <person name="Mohr S."/>
            <person name="Kane M.F."/>
            <person name="Williamson J."/>
            <person name="Simpson A.J.G."/>
            <person name="Bulyk M.L."/>
            <person name="Harlow E."/>
            <person name="Marsischky G."/>
            <person name="Kolodner R.D."/>
            <person name="LaBaer J."/>
        </authorList>
    </citation>
    <scope>NUCLEOTIDE SEQUENCE [GENOMIC DNA]</scope>
    <source>
        <strain>ATCC 204508 / S288c</strain>
    </source>
</reference>
<reference key="6">
    <citation type="journal article" date="2003" name="Nature">
        <title>Global analysis of protein expression in yeast.</title>
        <authorList>
            <person name="Ghaemmaghami S."/>
            <person name="Huh W.-K."/>
            <person name="Bower K."/>
            <person name="Howson R.W."/>
            <person name="Belle A."/>
            <person name="Dephoure N."/>
            <person name="O'Shea E.K."/>
            <person name="Weissman J.S."/>
        </authorList>
    </citation>
    <scope>LEVEL OF PROTEIN EXPRESSION [LARGE SCALE ANALYSIS]</scope>
</reference>
<reference key="7">
    <citation type="journal article" date="2005" name="J. Biol. Chem.">
        <title>Interactions among yeast protein-disulfide isomerase proteins and endoplasmic reticulum chaperone proteins influence their activities.</title>
        <authorList>
            <person name="Kimura T."/>
            <person name="Hosoda Y."/>
            <person name="Sato Y."/>
            <person name="Kitamura Y."/>
            <person name="Ikeda T."/>
            <person name="Horibe T."/>
            <person name="Kikuchi M."/>
        </authorList>
    </citation>
    <scope>FUNCTION</scope>
    <scope>INTERACTION WITH MPD1</scope>
</reference>
<organism>
    <name type="scientific">Saccharomyces cerevisiae (strain ATCC 204508 / S288c)</name>
    <name type="common">Baker's yeast</name>
    <dbReference type="NCBI Taxonomy" id="559292"/>
    <lineage>
        <taxon>Eukaryota</taxon>
        <taxon>Fungi</taxon>
        <taxon>Dikarya</taxon>
        <taxon>Ascomycota</taxon>
        <taxon>Saccharomycotina</taxon>
        <taxon>Saccharomycetes</taxon>
        <taxon>Saccharomycetales</taxon>
        <taxon>Saccharomycetaceae</taxon>
        <taxon>Saccharomyces</taxon>
    </lineage>
</organism>
<evidence type="ECO:0000250" key="1"/>
<evidence type="ECO:0000250" key="2">
    <source>
        <dbReference type="UniProtKB" id="P14211"/>
    </source>
</evidence>
<evidence type="ECO:0000255" key="3"/>
<evidence type="ECO:0000269" key="4">
    <source>
    </source>
</evidence>
<evidence type="ECO:0000269" key="5">
    <source>
    </source>
</evidence>
<evidence type="ECO:0000305" key="6"/>
<comment type="function">
    <text evidence="5">Interacts with newly synthesized monoglucosylated glycoproteins in the endoplasmic reticulum. It may act in assisting protein assembly and/or in the retention within the ER of unassembled protein subunits. It seems to play a major role in the quality control apparatus of the ER by the retention of incorrectly folded proteins.</text>
</comment>
<comment type="subunit">
    <text evidence="5">Interacts with MPD1.</text>
</comment>
<comment type="subcellular location">
    <subcellularLocation>
        <location evidence="1">Endoplasmic reticulum membrane</location>
        <topology evidence="1">Single-pass type I membrane protein</topology>
    </subcellularLocation>
</comment>
<comment type="miscellaneous">
    <text>In contrast with other calnexin, yeast CNE1 does not seem to bind calcium.</text>
</comment>
<comment type="miscellaneous">
    <text evidence="4">Present with 4760 molecules/cell in log phase SD medium.</text>
</comment>
<comment type="similarity">
    <text evidence="6">Belongs to the calreticulin family.</text>
</comment>
<proteinExistence type="evidence at protein level"/>
<sequence length="502" mass="56968">MKFSAYLWWLFLNLALVKGTSLLSNVTLAEDSFWEHFQAYTNTKHLNQEWITSEAVNNEGSKIYGAQWRLSQGRLQGSAWDKGIAVRTGNAAAMIGHLLETPINVSETDTLVVQYEIKLDNSLTCGGAFIKLMSGFMNVEALKHYAPDTEGVELVFGPDYCAPEINGVQFAINKVDKITHESKLRYLQEMPLSKLTDTSQSHLYTLIIDESAQSFQILIDGKTVMVREHIEDKKKVNFEPPITPPLMIPDVSVAKPHDWDDRIRIPDPEAVKLSDRDERDPLMIPHPDGTEPPEWNSSIPEYILDPNAQKPSWWKELEHGEWIPPMIKNPLCTAERGCGQQIPGLINNAKYKGPGELNEIINPNYMGEWHPPEIENPLYYEEQHPLRIENVISGVILEFWSGSPNMLISNIYVGKNVTEAQIIGNKTWLMRDRAFRGSDGPTERKFMNSRLGNLQTTFHNERESPNPFDRIIDRILEQPLKFVLTAAVVLLTTSVLCCVVFT</sequence>